<gene>
    <name evidence="1" type="primary">cas2</name>
    <name type="ordered locus">Acav_0269</name>
</gene>
<sequence>MLTGYRLMWMVVMFDLPVITKAERKAATGFRNALLDVGFQMSQFSVYLRFCTSQAQVDTLCRQVEQALPAGGKVHIFQFTDKQYERAISFHGRSRQPAQKAPDQFDLF</sequence>
<name>CAS2_PARA1</name>
<proteinExistence type="inferred from homology"/>
<organism>
    <name type="scientific">Paracidovorax avenae (strain ATCC 19860 / DSM 7227 / CCUG 15838 / JCM 20985 / LMG 2117 / NCPPB 1011)</name>
    <name type="common">Acidovorax avenae</name>
    <dbReference type="NCBI Taxonomy" id="643561"/>
    <lineage>
        <taxon>Bacteria</taxon>
        <taxon>Pseudomonadati</taxon>
        <taxon>Pseudomonadota</taxon>
        <taxon>Betaproteobacteria</taxon>
        <taxon>Burkholderiales</taxon>
        <taxon>Comamonadaceae</taxon>
        <taxon>Paracidovorax</taxon>
    </lineage>
</organism>
<comment type="function">
    <text evidence="1">CRISPR (clustered regularly interspaced short palindromic repeat), is an adaptive immune system that provides protection against mobile genetic elements (viruses, transposable elements and conjugative plasmids). CRISPR clusters contain sequences complementary to antecedent mobile elements and target invading nucleic acids. CRISPR clusters are transcribed and processed into CRISPR RNA (crRNA). Functions as a ssRNA-specific endoribonuclease. Involved in the integration of spacer DNA into the CRISPR cassette.</text>
</comment>
<comment type="cofactor">
    <cofactor evidence="1">
        <name>Mg(2+)</name>
        <dbReference type="ChEBI" id="CHEBI:18420"/>
    </cofactor>
</comment>
<comment type="subunit">
    <text evidence="1">Homodimer, forms a heterotetramer with a Cas1 homodimer.</text>
</comment>
<comment type="similarity">
    <text evidence="1">Belongs to the CRISPR-associated endoribonuclease Cas2 protein family.</text>
</comment>
<accession>F0Q2T3</accession>
<feature type="chain" id="PRO_0000417700" description="CRISPR-associated endoribonuclease Cas2">
    <location>
        <begin position="1"/>
        <end position="108"/>
    </location>
</feature>
<feature type="binding site" evidence="1">
    <location>
        <position position="15"/>
    </location>
    <ligand>
        <name>Mg(2+)</name>
        <dbReference type="ChEBI" id="CHEBI:18420"/>
        <note>catalytic</note>
    </ligand>
</feature>
<keyword id="KW-0051">Antiviral defense</keyword>
<keyword id="KW-0255">Endonuclease</keyword>
<keyword id="KW-0378">Hydrolase</keyword>
<keyword id="KW-0460">Magnesium</keyword>
<keyword id="KW-0479">Metal-binding</keyword>
<keyword id="KW-0540">Nuclease</keyword>
<keyword id="KW-1185">Reference proteome</keyword>
<dbReference type="EC" id="3.1.-.-" evidence="1"/>
<dbReference type="EMBL" id="CP002521">
    <property type="protein sequence ID" value="ADX44192.1"/>
    <property type="molecule type" value="Genomic_DNA"/>
</dbReference>
<dbReference type="SMR" id="F0Q2T3"/>
<dbReference type="KEGG" id="aaa:Acav_0269"/>
<dbReference type="HOGENOM" id="CLU_150500_0_0_4"/>
<dbReference type="Proteomes" id="UP000002482">
    <property type="component" value="Chromosome"/>
</dbReference>
<dbReference type="GO" id="GO:0046872">
    <property type="term" value="F:metal ion binding"/>
    <property type="evidence" value="ECO:0007669"/>
    <property type="project" value="UniProtKB-UniRule"/>
</dbReference>
<dbReference type="GO" id="GO:0004521">
    <property type="term" value="F:RNA endonuclease activity"/>
    <property type="evidence" value="ECO:0007669"/>
    <property type="project" value="InterPro"/>
</dbReference>
<dbReference type="GO" id="GO:0051607">
    <property type="term" value="P:defense response to virus"/>
    <property type="evidence" value="ECO:0007669"/>
    <property type="project" value="UniProtKB-UniRule"/>
</dbReference>
<dbReference type="GO" id="GO:0043571">
    <property type="term" value="P:maintenance of CRISPR repeat elements"/>
    <property type="evidence" value="ECO:0007669"/>
    <property type="project" value="UniProtKB-UniRule"/>
</dbReference>
<dbReference type="HAMAP" id="MF_01471">
    <property type="entry name" value="Cas2"/>
    <property type="match status" value="1"/>
</dbReference>
<dbReference type="InterPro" id="IPR021127">
    <property type="entry name" value="CRISPR_associated_Cas2"/>
</dbReference>
<dbReference type="InterPro" id="IPR019199">
    <property type="entry name" value="Virulence_VapD/CRISPR_Cas2"/>
</dbReference>
<dbReference type="NCBIfam" id="TIGR01573">
    <property type="entry name" value="cas2"/>
    <property type="match status" value="1"/>
</dbReference>
<dbReference type="Pfam" id="PF09827">
    <property type="entry name" value="CRISPR_Cas2"/>
    <property type="match status" value="1"/>
</dbReference>
<dbReference type="SUPFAM" id="SSF143430">
    <property type="entry name" value="TTP0101/SSO1404-like"/>
    <property type="match status" value="1"/>
</dbReference>
<evidence type="ECO:0000255" key="1">
    <source>
        <dbReference type="HAMAP-Rule" id="MF_01471"/>
    </source>
</evidence>
<reference key="1">
    <citation type="submission" date="2011-02" db="EMBL/GenBank/DDBJ databases">
        <title>Complete sequence of Acidovorax avenae subsp. avenae ATCC 19860.</title>
        <authorList>
            <person name="Lucas S."/>
            <person name="Copeland A."/>
            <person name="Lapidus A."/>
            <person name="Cheng J.-F."/>
            <person name="Goodwin L."/>
            <person name="Pitluck S."/>
            <person name="Chertkov O."/>
            <person name="Held B."/>
            <person name="Detter J.C."/>
            <person name="Han C."/>
            <person name="Tapia R."/>
            <person name="Land M."/>
            <person name="Hauser L."/>
            <person name="Kyrpides N."/>
            <person name="Ivanova N."/>
            <person name="Ovchinnikova G."/>
            <person name="Pagani I."/>
            <person name="Gordon S."/>
            <person name="Woyke T."/>
        </authorList>
    </citation>
    <scope>NUCLEOTIDE SEQUENCE [LARGE SCALE GENOMIC DNA]</scope>
    <source>
        <strain>ATCC 19860 / DSM 7227 / CCUG 15838 / JCM 20985 / LMG 2117 / NCPPB 1011</strain>
    </source>
</reference>
<protein>
    <recommendedName>
        <fullName evidence="1">CRISPR-associated endoribonuclease Cas2</fullName>
        <ecNumber evidence="1">3.1.-.-</ecNumber>
    </recommendedName>
</protein>